<gene>
    <name type="primary">Drice</name>
    <name type="synonym">ICE</name>
    <name type="ORF">CG7788</name>
</gene>
<evidence type="ECO:0000250" key="1"/>
<evidence type="ECO:0000256" key="2">
    <source>
        <dbReference type="SAM" id="MobiDB-lite"/>
    </source>
</evidence>
<evidence type="ECO:0000269" key="3">
    <source>
    </source>
</evidence>
<evidence type="ECO:0000269" key="4">
    <source>
    </source>
</evidence>
<evidence type="ECO:0000269" key="5">
    <source>
    </source>
</evidence>
<evidence type="ECO:0000269" key="6">
    <source>
    </source>
</evidence>
<evidence type="ECO:0000269" key="7">
    <source>
    </source>
</evidence>
<evidence type="ECO:0000305" key="8"/>
<evidence type="ECO:0000312" key="9">
    <source>
        <dbReference type="FlyBase" id="FBgn0019972"/>
    </source>
</evidence>
<evidence type="ECO:0007829" key="10">
    <source>
        <dbReference type="PDB" id="3SIP"/>
    </source>
</evidence>
<evidence type="ECO:0007829" key="11">
    <source>
        <dbReference type="PDB" id="3SIR"/>
    </source>
</evidence>
<reference key="1">
    <citation type="journal article" date="1997" name="EMBO J.">
        <title>Identification of a Drosophila melanogaster ICE/CED-3-related protease, drICE.</title>
        <authorList>
            <person name="Fraser A.G."/>
            <person name="Evan G.I."/>
        </authorList>
    </citation>
    <scope>NUCLEOTIDE SEQUENCE [MRNA]</scope>
    <source>
        <tissue>Embryo</tissue>
    </source>
</reference>
<reference key="2">
    <citation type="journal article" date="2000" name="Science">
        <title>The genome sequence of Drosophila melanogaster.</title>
        <authorList>
            <person name="Adams M.D."/>
            <person name="Celniker S.E."/>
            <person name="Holt R.A."/>
            <person name="Evans C.A."/>
            <person name="Gocayne J.D."/>
            <person name="Amanatides P.G."/>
            <person name="Scherer S.E."/>
            <person name="Li P.W."/>
            <person name="Hoskins R.A."/>
            <person name="Galle R.F."/>
            <person name="George R.A."/>
            <person name="Lewis S.E."/>
            <person name="Richards S."/>
            <person name="Ashburner M."/>
            <person name="Henderson S.N."/>
            <person name="Sutton G.G."/>
            <person name="Wortman J.R."/>
            <person name="Yandell M.D."/>
            <person name="Zhang Q."/>
            <person name="Chen L.X."/>
            <person name="Brandon R.C."/>
            <person name="Rogers Y.-H.C."/>
            <person name="Blazej R.G."/>
            <person name="Champe M."/>
            <person name="Pfeiffer B.D."/>
            <person name="Wan K.H."/>
            <person name="Doyle C."/>
            <person name="Baxter E.G."/>
            <person name="Helt G."/>
            <person name="Nelson C.R."/>
            <person name="Miklos G.L.G."/>
            <person name="Abril J.F."/>
            <person name="Agbayani A."/>
            <person name="An H.-J."/>
            <person name="Andrews-Pfannkoch C."/>
            <person name="Baldwin D."/>
            <person name="Ballew R.M."/>
            <person name="Basu A."/>
            <person name="Baxendale J."/>
            <person name="Bayraktaroglu L."/>
            <person name="Beasley E.M."/>
            <person name="Beeson K.Y."/>
            <person name="Benos P.V."/>
            <person name="Berman B.P."/>
            <person name="Bhandari D."/>
            <person name="Bolshakov S."/>
            <person name="Borkova D."/>
            <person name="Botchan M.R."/>
            <person name="Bouck J."/>
            <person name="Brokstein P."/>
            <person name="Brottier P."/>
            <person name="Burtis K.C."/>
            <person name="Busam D.A."/>
            <person name="Butler H."/>
            <person name="Cadieu E."/>
            <person name="Center A."/>
            <person name="Chandra I."/>
            <person name="Cherry J.M."/>
            <person name="Cawley S."/>
            <person name="Dahlke C."/>
            <person name="Davenport L.B."/>
            <person name="Davies P."/>
            <person name="de Pablos B."/>
            <person name="Delcher A."/>
            <person name="Deng Z."/>
            <person name="Mays A.D."/>
            <person name="Dew I."/>
            <person name="Dietz S.M."/>
            <person name="Dodson K."/>
            <person name="Doup L.E."/>
            <person name="Downes M."/>
            <person name="Dugan-Rocha S."/>
            <person name="Dunkov B.C."/>
            <person name="Dunn P."/>
            <person name="Durbin K.J."/>
            <person name="Evangelista C.C."/>
            <person name="Ferraz C."/>
            <person name="Ferriera S."/>
            <person name="Fleischmann W."/>
            <person name="Fosler C."/>
            <person name="Gabrielian A.E."/>
            <person name="Garg N.S."/>
            <person name="Gelbart W.M."/>
            <person name="Glasser K."/>
            <person name="Glodek A."/>
            <person name="Gong F."/>
            <person name="Gorrell J.H."/>
            <person name="Gu Z."/>
            <person name="Guan P."/>
            <person name="Harris M."/>
            <person name="Harris N.L."/>
            <person name="Harvey D.A."/>
            <person name="Heiman T.J."/>
            <person name="Hernandez J.R."/>
            <person name="Houck J."/>
            <person name="Hostin D."/>
            <person name="Houston K.A."/>
            <person name="Howland T.J."/>
            <person name="Wei M.-H."/>
            <person name="Ibegwam C."/>
            <person name="Jalali M."/>
            <person name="Kalush F."/>
            <person name="Karpen G.H."/>
            <person name="Ke Z."/>
            <person name="Kennison J.A."/>
            <person name="Ketchum K.A."/>
            <person name="Kimmel B.E."/>
            <person name="Kodira C.D."/>
            <person name="Kraft C.L."/>
            <person name="Kravitz S."/>
            <person name="Kulp D."/>
            <person name="Lai Z."/>
            <person name="Lasko P."/>
            <person name="Lei Y."/>
            <person name="Levitsky A.A."/>
            <person name="Li J.H."/>
            <person name="Li Z."/>
            <person name="Liang Y."/>
            <person name="Lin X."/>
            <person name="Liu X."/>
            <person name="Mattei B."/>
            <person name="McIntosh T.C."/>
            <person name="McLeod M.P."/>
            <person name="McPherson D."/>
            <person name="Merkulov G."/>
            <person name="Milshina N.V."/>
            <person name="Mobarry C."/>
            <person name="Morris J."/>
            <person name="Moshrefi A."/>
            <person name="Mount S.M."/>
            <person name="Moy M."/>
            <person name="Murphy B."/>
            <person name="Murphy L."/>
            <person name="Muzny D.M."/>
            <person name="Nelson D.L."/>
            <person name="Nelson D.R."/>
            <person name="Nelson K.A."/>
            <person name="Nixon K."/>
            <person name="Nusskern D.R."/>
            <person name="Pacleb J.M."/>
            <person name="Palazzolo M."/>
            <person name="Pittman G.S."/>
            <person name="Pan S."/>
            <person name="Pollard J."/>
            <person name="Puri V."/>
            <person name="Reese M.G."/>
            <person name="Reinert K."/>
            <person name="Remington K."/>
            <person name="Saunders R.D.C."/>
            <person name="Scheeler F."/>
            <person name="Shen H."/>
            <person name="Shue B.C."/>
            <person name="Siden-Kiamos I."/>
            <person name="Simpson M."/>
            <person name="Skupski M.P."/>
            <person name="Smith T.J."/>
            <person name="Spier E."/>
            <person name="Spradling A.C."/>
            <person name="Stapleton M."/>
            <person name="Strong R."/>
            <person name="Sun E."/>
            <person name="Svirskas R."/>
            <person name="Tector C."/>
            <person name="Turner R."/>
            <person name="Venter E."/>
            <person name="Wang A.H."/>
            <person name="Wang X."/>
            <person name="Wang Z.-Y."/>
            <person name="Wassarman D.A."/>
            <person name="Weinstock G.M."/>
            <person name="Weissenbach J."/>
            <person name="Williams S.M."/>
            <person name="Woodage T."/>
            <person name="Worley K.C."/>
            <person name="Wu D."/>
            <person name="Yang S."/>
            <person name="Yao Q.A."/>
            <person name="Ye J."/>
            <person name="Yeh R.-F."/>
            <person name="Zaveri J.S."/>
            <person name="Zhan M."/>
            <person name="Zhang G."/>
            <person name="Zhao Q."/>
            <person name="Zheng L."/>
            <person name="Zheng X.H."/>
            <person name="Zhong F.N."/>
            <person name="Zhong W."/>
            <person name="Zhou X."/>
            <person name="Zhu S.C."/>
            <person name="Zhu X."/>
            <person name="Smith H.O."/>
            <person name="Gibbs R.A."/>
            <person name="Myers E.W."/>
            <person name="Rubin G.M."/>
            <person name="Venter J.C."/>
        </authorList>
    </citation>
    <scope>NUCLEOTIDE SEQUENCE [LARGE SCALE GENOMIC DNA]</scope>
    <source>
        <strain>Berkeley</strain>
    </source>
</reference>
<reference key="3">
    <citation type="journal article" date="2002" name="Genome Biol.">
        <title>Annotation of the Drosophila melanogaster euchromatic genome: a systematic review.</title>
        <authorList>
            <person name="Misra S."/>
            <person name="Crosby M.A."/>
            <person name="Mungall C.J."/>
            <person name="Matthews B.B."/>
            <person name="Campbell K.S."/>
            <person name="Hradecky P."/>
            <person name="Huang Y."/>
            <person name="Kaminker J.S."/>
            <person name="Millburn G.H."/>
            <person name="Prochnik S.E."/>
            <person name="Smith C.D."/>
            <person name="Tupy J.L."/>
            <person name="Whitfield E.J."/>
            <person name="Bayraktaroglu L."/>
            <person name="Berman B.P."/>
            <person name="Bettencourt B.R."/>
            <person name="Celniker S.E."/>
            <person name="de Grey A.D.N.J."/>
            <person name="Drysdale R.A."/>
            <person name="Harris N.L."/>
            <person name="Richter J."/>
            <person name="Russo S."/>
            <person name="Schroeder A.J."/>
            <person name="Shu S.Q."/>
            <person name="Stapleton M."/>
            <person name="Yamada C."/>
            <person name="Ashburner M."/>
            <person name="Gelbart W.M."/>
            <person name="Rubin G.M."/>
            <person name="Lewis S.E."/>
        </authorList>
    </citation>
    <scope>GENOME REANNOTATION</scope>
    <source>
        <strain>Berkeley</strain>
    </source>
</reference>
<reference key="4">
    <citation type="journal article" date="2002" name="Genome Biol.">
        <title>A Drosophila full-length cDNA resource.</title>
        <authorList>
            <person name="Stapleton M."/>
            <person name="Carlson J.W."/>
            <person name="Brokstein P."/>
            <person name="Yu C."/>
            <person name="Champe M."/>
            <person name="George R.A."/>
            <person name="Guarin H."/>
            <person name="Kronmiller B."/>
            <person name="Pacleb J.M."/>
            <person name="Park S."/>
            <person name="Wan K.H."/>
            <person name="Rubin G.M."/>
            <person name="Celniker S.E."/>
        </authorList>
    </citation>
    <scope>NUCLEOTIDE SEQUENCE [LARGE SCALE MRNA]</scope>
    <source>
        <strain>Berkeley</strain>
        <tissue>Head</tissue>
    </source>
</reference>
<reference key="5">
    <citation type="journal article" date="1999" name="Mol. Cell">
        <title>Control of the cell death pathway by Dapaf-1, a Drosophila Apaf-1/CED-4-related caspase activator.</title>
        <authorList>
            <person name="Kanuka H."/>
            <person name="Sawamoto K."/>
            <person name="Inohara N."/>
            <person name="Matsuno K."/>
            <person name="Okano H."/>
            <person name="Miura M."/>
        </authorList>
    </citation>
    <scope>INTERACTION WITH DARK</scope>
</reference>
<reference key="6">
    <citation type="journal article" date="2000" name="EMBO J.">
        <title>The Drosophila caspase DRONC is regulated by DIAP1.</title>
        <authorList>
            <person name="Meier P."/>
            <person name="Silke J."/>
            <person name="Leevers S.J."/>
            <person name="Evan G.I."/>
        </authorList>
    </citation>
    <scope>HOMODIMERIZATION</scope>
    <scope>INTERACTION WITH DRONC</scope>
    <source>
        <tissue>Embryo</tissue>
    </source>
</reference>
<reference key="7">
    <citation type="journal article" date="2007" name="J. Cell Biol.">
        <title>DIAP2 functions as a mechanism-based regulator of drICE that contributes to the caspase activity threshold in living cells.</title>
        <authorList>
            <person name="Ribeiro P.S."/>
            <person name="Kuranaga E."/>
            <person name="Tenev T."/>
            <person name="Leulier F."/>
            <person name="Miura M."/>
            <person name="Meier P."/>
        </authorList>
    </citation>
    <scope>INTERACTION WITH DIAP2</scope>
    <scope>MUTAGENESIS OF ALA-29 AND CYS-211</scope>
</reference>
<reference key="8">
    <citation type="journal article" date="2011" name="Structure">
        <title>Structure of the Drosophila apoptosome at 6.9a resolution.</title>
        <authorList>
            <person name="Yuan S."/>
            <person name="Yu X."/>
            <person name="Topf M."/>
            <person name="Dorstyn L."/>
            <person name="Kumar S."/>
            <person name="Ludtke S.J."/>
            <person name="Akey C.W."/>
        </authorList>
    </citation>
    <scope>ACTIVITY REGULATION</scope>
</reference>
<reference key="9">
    <citation type="journal article" date="2015" name="Genes Dev.">
        <title>Structure of the apoptosome: mechanistic insights into activation of an initiator caspase from Drosophila.</title>
        <authorList>
            <person name="Pang Y."/>
            <person name="Bai X.C."/>
            <person name="Yan C."/>
            <person name="Hao Q."/>
            <person name="Chen Z."/>
            <person name="Wang J.W."/>
            <person name="Scheres S.H."/>
            <person name="Shi Y."/>
        </authorList>
    </citation>
    <scope>ACTIVITY REGULATION</scope>
</reference>
<organism>
    <name type="scientific">Drosophila melanogaster</name>
    <name type="common">Fruit fly</name>
    <dbReference type="NCBI Taxonomy" id="7227"/>
    <lineage>
        <taxon>Eukaryota</taxon>
        <taxon>Metazoa</taxon>
        <taxon>Ecdysozoa</taxon>
        <taxon>Arthropoda</taxon>
        <taxon>Hexapoda</taxon>
        <taxon>Insecta</taxon>
        <taxon>Pterygota</taxon>
        <taxon>Neoptera</taxon>
        <taxon>Endopterygota</taxon>
        <taxon>Diptera</taxon>
        <taxon>Brachycera</taxon>
        <taxon>Muscomorpha</taxon>
        <taxon>Ephydroidea</taxon>
        <taxon>Drosophilidae</taxon>
        <taxon>Drosophila</taxon>
        <taxon>Sophophora</taxon>
    </lineage>
</organism>
<comment type="function">
    <text>Involved in the activation cascade of caspases responsible for apoptosis execution. Acts downstream of rpr. Cleaves baculovirus p35 and lamin DmO in vitro.</text>
</comment>
<comment type="activity regulation">
    <text evidence="6 7">Zymogen activated by proteolytic cleavage; cleaved by the initiator caspase Dronc upon apoptosis induction.</text>
</comment>
<comment type="subunit">
    <text evidence="3 4 5">Heterotetramer that consists of two anti-parallel arranged heterodimers, each one formed by a 21 kDa (p21) and a 12 kDa (p12) subunit. Inactive pro-form can homodimerize. Dronc and Drice can form a stable complex (PubMed:10675329). Interacts with Diap2 (via BIR3 domain) to form a stable complex (PubMed:18166655). May interact with some isoforms of Dark (PubMed:10619023).</text>
</comment>
<comment type="interaction">
    <interactant intactId="EBI-91422">
        <id>O01382</id>
    </interactant>
    <interactant intactId="EBI-456419">
        <id>Q24306</id>
        <label>Diap1</label>
    </interactant>
    <organismsDiffer>false</organismsDiffer>
    <experiments>3</experiments>
</comment>
<comment type="interaction">
    <interactant intactId="EBI-91422">
        <id>O01382</id>
    </interactant>
    <interactant intactId="EBI-112046">
        <id>Q24307</id>
        <label>Diap2</label>
    </interactant>
    <organismsDiffer>false</organismsDiffer>
    <experiments>4</experiments>
</comment>
<comment type="interaction">
    <interactant intactId="EBI-91422">
        <id>O01382</id>
    </interactant>
    <interactant intactId="EBI-108311">
        <id>Q9XYF4</id>
        <label>Dronc</label>
    </interactant>
    <organismsDiffer>false</organismsDiffer>
    <experiments>3</experiments>
</comment>
<comment type="developmental stage">
    <text>Expressed at all stages where apoptosis occurs.</text>
</comment>
<comment type="similarity">
    <text evidence="8">Belongs to the peptidase C14A family.</text>
</comment>
<protein>
    <recommendedName>
        <fullName evidence="8">Caspase drICE</fullName>
        <ecNumber>3.4.22.-</ecNumber>
    </recommendedName>
    <alternativeName>
        <fullName evidence="9">Death related ICE-like caspase</fullName>
    </alternativeName>
    <component>
        <recommendedName>
            <fullName>Caspase subunit p21</fullName>
        </recommendedName>
    </component>
    <component>
        <recommendedName>
            <fullName>Caspase subunit p12</fullName>
        </recommendedName>
    </component>
</protein>
<feature type="propeptide" id="PRO_0000004666" evidence="1">
    <location>
        <begin position="1"/>
        <end position="28"/>
    </location>
</feature>
<feature type="chain" id="PRO_0000004667" description="Caspase subunit p21" evidence="1">
    <location>
        <begin position="29"/>
        <end position="217"/>
    </location>
</feature>
<feature type="propeptide" id="PRO_0000004668" evidence="1">
    <location>
        <begin position="218"/>
        <end position="230"/>
    </location>
</feature>
<feature type="chain" id="PRO_0000004669" description="Caspase subunit p12" evidence="1">
    <location>
        <begin position="231"/>
        <end position="339"/>
    </location>
</feature>
<feature type="region of interest" description="Disordered" evidence="2">
    <location>
        <begin position="1"/>
        <end position="45"/>
    </location>
</feature>
<feature type="active site" evidence="1">
    <location>
        <position position="169"/>
    </location>
</feature>
<feature type="active site" evidence="1">
    <location>
        <position position="211"/>
    </location>
</feature>
<feature type="mutagenesis site" description="Abolishes binding to Diap2 but has no effect on Drice processing or activity." evidence="5">
    <original>A</original>
    <variation>V</variation>
    <location>
        <position position="29"/>
    </location>
</feature>
<feature type="mutagenesis site" description="No effect on binding to Diap2 but may affect stability of complex formed with Diap2." evidence="5">
    <original>C</original>
    <variation>A</variation>
    <location>
        <position position="211"/>
    </location>
</feature>
<feature type="sequence conflict" description="In Ref. 1; CAA72937." evidence="8" ref="1">
    <original>A</original>
    <variation>S</variation>
    <location>
        <position position="151"/>
    </location>
</feature>
<feature type="sequence conflict" description="In Ref. 1; CAA72937." evidence="8" ref="1">
    <original>S</original>
    <variation>T</variation>
    <location>
        <position position="265"/>
    </location>
</feature>
<feature type="strand" evidence="11">
    <location>
        <begin position="90"/>
        <end position="101"/>
    </location>
</feature>
<feature type="strand" evidence="10">
    <location>
        <begin position="105"/>
        <end position="108"/>
    </location>
</feature>
<feature type="helix" evidence="11">
    <location>
        <begin position="118"/>
        <end position="128"/>
    </location>
</feature>
<feature type="strand" evidence="11">
    <location>
        <begin position="132"/>
        <end position="138"/>
    </location>
</feature>
<feature type="helix" evidence="11">
    <location>
        <begin position="141"/>
        <end position="152"/>
    </location>
</feature>
<feature type="helix" evidence="10">
    <location>
        <begin position="156"/>
        <end position="158"/>
    </location>
</feature>
<feature type="strand" evidence="11">
    <location>
        <begin position="159"/>
        <end position="168"/>
    </location>
</feature>
<feature type="helix" evidence="11">
    <location>
        <begin position="180"/>
        <end position="186"/>
    </location>
</feature>
<feature type="helix" evidence="11">
    <location>
        <begin position="189"/>
        <end position="191"/>
    </location>
</feature>
<feature type="turn" evidence="11">
    <location>
        <begin position="193"/>
        <end position="195"/>
    </location>
</feature>
<feature type="helix" evidence="11">
    <location>
        <begin position="197"/>
        <end position="199"/>
    </location>
</feature>
<feature type="strand" evidence="11">
    <location>
        <begin position="200"/>
        <end position="202"/>
    </location>
</feature>
<feature type="strand" evidence="11">
    <location>
        <begin position="204"/>
        <end position="211"/>
    </location>
</feature>
<feature type="strand" evidence="11">
    <location>
        <begin position="245"/>
        <end position="252"/>
    </location>
</feature>
<feature type="turn" evidence="10">
    <location>
        <begin position="261"/>
        <end position="263"/>
    </location>
</feature>
<feature type="helix" evidence="11">
    <location>
        <begin position="266"/>
        <end position="278"/>
    </location>
</feature>
<feature type="turn" evidence="11">
    <location>
        <begin position="279"/>
        <end position="281"/>
    </location>
</feature>
<feature type="helix" evidence="11">
    <location>
        <begin position="284"/>
        <end position="296"/>
    </location>
</feature>
<feature type="helix" evidence="10">
    <location>
        <begin position="307"/>
        <end position="309"/>
    </location>
</feature>
<feature type="strand" evidence="11">
    <location>
        <begin position="317"/>
        <end position="320"/>
    </location>
</feature>
<feature type="strand" evidence="11">
    <location>
        <begin position="323"/>
        <end position="325"/>
    </location>
</feature>
<proteinExistence type="evidence at protein level"/>
<sequence length="339" mass="37363">MDATNNGESADQVGIRVGNPEQPNDHTDALGSVGSGGAGSSGLVAGSSHPYGSGAIGQLANGYSSPSSSYRKNVAKMVTDRHAAEYNMRHKNRGMALIFNHEHFEVPTLKSRAGTNVDCENLTRVLKQLDFEVTVYKDCRYKDILRTIEYAASQNHSDSDCILVAILSHGEMGYIYAKDTQYKLDNIWSFFTANHCPSLAGKPKLFFIQACQGDRLDGGVTMQRSQTETDGDSSMSYKIPVHADFLIAYSTVPGFYSWRNTTRGSWFMQSLCAELAANGKRLDILTLLTFVCQRVAVDFESCTPDTPEMHQQKQIPCITTMLTRILRFSDKQLAPAGRV</sequence>
<name>DRICE_DROME</name>
<accession>O01382</accession>
<accession>Q9VAH1</accession>
<keyword id="KW-0002">3D-structure</keyword>
<keyword id="KW-0053">Apoptosis</keyword>
<keyword id="KW-0378">Hydrolase</keyword>
<keyword id="KW-0645">Protease</keyword>
<keyword id="KW-1185">Reference proteome</keyword>
<keyword id="KW-0788">Thiol protease</keyword>
<keyword id="KW-0865">Zymogen</keyword>
<dbReference type="EC" id="3.4.22.-"/>
<dbReference type="EMBL" id="Y12261">
    <property type="protein sequence ID" value="CAA72937.1"/>
    <property type="molecule type" value="mRNA"/>
</dbReference>
<dbReference type="EMBL" id="AE014297">
    <property type="protein sequence ID" value="AAF56939.1"/>
    <property type="molecule type" value="Genomic_DNA"/>
</dbReference>
<dbReference type="EMBL" id="AY058451">
    <property type="protein sequence ID" value="AAL13680.1"/>
    <property type="molecule type" value="mRNA"/>
</dbReference>
<dbReference type="RefSeq" id="NP_524551.2">
    <property type="nucleotide sequence ID" value="NM_079827.3"/>
</dbReference>
<dbReference type="PDB" id="3SIP">
    <property type="method" value="X-ray"/>
    <property type="resolution" value="3.50 A"/>
    <property type="chains" value="A/C=78-230, B/D=231-339"/>
</dbReference>
<dbReference type="PDB" id="3SIR">
    <property type="method" value="X-ray"/>
    <property type="resolution" value="2.68 A"/>
    <property type="chains" value="A/B/C/D=78-332"/>
</dbReference>
<dbReference type="PDBsum" id="3SIP"/>
<dbReference type="PDBsum" id="3SIR"/>
<dbReference type="SMR" id="O01382"/>
<dbReference type="BioGRID" id="68378">
    <property type="interactions" value="24"/>
</dbReference>
<dbReference type="DIP" id="DIP-21838N"/>
<dbReference type="ELM" id="O01382"/>
<dbReference type="FunCoup" id="O01382">
    <property type="interactions" value="955"/>
</dbReference>
<dbReference type="IntAct" id="O01382">
    <property type="interactions" value="8"/>
</dbReference>
<dbReference type="MINT" id="O01382"/>
<dbReference type="STRING" id="7227.FBpp0084848"/>
<dbReference type="MEROPS" id="C14.015"/>
<dbReference type="PaxDb" id="7227-FBpp0084848"/>
<dbReference type="EnsemblMetazoa" id="FBtr0085482">
    <property type="protein sequence ID" value="FBpp0084848"/>
    <property type="gene ID" value="FBgn0019972"/>
</dbReference>
<dbReference type="GeneID" id="43514"/>
<dbReference type="KEGG" id="dme:Dmel_CG7788"/>
<dbReference type="AGR" id="FB:FBgn0019972"/>
<dbReference type="CTD" id="43514"/>
<dbReference type="FlyBase" id="FBgn0019972">
    <property type="gene designation" value="Drice"/>
</dbReference>
<dbReference type="VEuPathDB" id="VectorBase:FBgn0019972"/>
<dbReference type="eggNOG" id="KOG3573">
    <property type="taxonomic scope" value="Eukaryota"/>
</dbReference>
<dbReference type="GeneTree" id="ENSGT00940000153232"/>
<dbReference type="HOGENOM" id="CLU_036904_2_0_1"/>
<dbReference type="InParanoid" id="O01382"/>
<dbReference type="OMA" id="HFTANHC"/>
<dbReference type="OrthoDB" id="6116485at2759"/>
<dbReference type="PhylomeDB" id="O01382"/>
<dbReference type="Reactome" id="R-DME-111458">
    <property type="pathway name" value="Formation of apoptosome"/>
</dbReference>
<dbReference type="Reactome" id="R-DME-111459">
    <property type="pathway name" value="Activation of caspases through apoptosome-mediated cleavage"/>
</dbReference>
<dbReference type="Reactome" id="R-DME-111465">
    <property type="pathway name" value="Apoptotic cleavage of cellular proteins"/>
</dbReference>
<dbReference type="Reactome" id="R-DME-111469">
    <property type="pathway name" value="SMAC, XIAP-regulated apoptotic response"/>
</dbReference>
<dbReference type="Reactome" id="R-DME-140342">
    <property type="pathway name" value="Apoptosis induced DNA fragmentation"/>
</dbReference>
<dbReference type="Reactome" id="R-DME-198323">
    <property type="pathway name" value="AKT phosphorylates targets in the cytosol"/>
</dbReference>
<dbReference type="Reactome" id="R-DME-2028269">
    <property type="pathway name" value="Signaling by Hippo"/>
</dbReference>
<dbReference type="Reactome" id="R-DME-264870">
    <property type="pathway name" value="Caspase-mediated cleavage of cytoskeletal proteins"/>
</dbReference>
<dbReference type="Reactome" id="R-DME-351906">
    <property type="pathway name" value="Apoptotic cleavage of cell adhesion proteins"/>
</dbReference>
<dbReference type="Reactome" id="R-DME-418889">
    <property type="pathway name" value="Caspase activation via Dependence Receptors in the absence of ligand"/>
</dbReference>
<dbReference type="Reactome" id="R-DME-5357905">
    <property type="pathway name" value="Regulation of TNFR1 signaling"/>
</dbReference>
<dbReference type="Reactome" id="R-DME-6803207">
    <property type="pathway name" value="TP53 Regulates Transcription of Caspase Activators and Caspases"/>
</dbReference>
<dbReference type="Reactome" id="R-DME-9627069">
    <property type="pathway name" value="Regulation of the apoptosome activity"/>
</dbReference>
<dbReference type="SignaLink" id="O01382"/>
<dbReference type="BioGRID-ORCS" id="43514">
    <property type="hits" value="0 hits in 3 CRISPR screens"/>
</dbReference>
<dbReference type="EvolutionaryTrace" id="O01382"/>
<dbReference type="GenomeRNAi" id="43514"/>
<dbReference type="PRO" id="PR:O01382"/>
<dbReference type="Proteomes" id="UP000000803">
    <property type="component" value="Chromosome 3R"/>
</dbReference>
<dbReference type="Bgee" id="FBgn0019972">
    <property type="expression patterns" value="Expressed in cleaving embryo and 92 other cell types or tissues"/>
</dbReference>
<dbReference type="GO" id="GO:0005737">
    <property type="term" value="C:cytoplasm"/>
    <property type="evidence" value="ECO:0000314"/>
    <property type="project" value="FlyBase"/>
</dbReference>
<dbReference type="GO" id="GO:0005634">
    <property type="term" value="C:nucleus"/>
    <property type="evidence" value="ECO:0000314"/>
    <property type="project" value="FlyBase"/>
</dbReference>
<dbReference type="GO" id="GO:0005886">
    <property type="term" value="C:plasma membrane"/>
    <property type="evidence" value="ECO:0000314"/>
    <property type="project" value="FlyBase"/>
</dbReference>
<dbReference type="GO" id="GO:1990525">
    <property type="term" value="F:BIR domain binding"/>
    <property type="evidence" value="ECO:0000353"/>
    <property type="project" value="FlyBase"/>
</dbReference>
<dbReference type="GO" id="GO:0004197">
    <property type="term" value="F:cysteine-type endopeptidase activity"/>
    <property type="evidence" value="ECO:0000314"/>
    <property type="project" value="FlyBase"/>
</dbReference>
<dbReference type="GO" id="GO:0031625">
    <property type="term" value="F:ubiquitin protein ligase binding"/>
    <property type="evidence" value="ECO:0000314"/>
    <property type="project" value="FlyBase"/>
</dbReference>
<dbReference type="GO" id="GO:0006915">
    <property type="term" value="P:apoptotic process"/>
    <property type="evidence" value="ECO:0000316"/>
    <property type="project" value="FlyBase"/>
</dbReference>
<dbReference type="GO" id="GO:0046667">
    <property type="term" value="P:compound eye retinal cell programmed cell death"/>
    <property type="evidence" value="ECO:0000315"/>
    <property type="project" value="FlyBase"/>
</dbReference>
<dbReference type="GO" id="GO:0097194">
    <property type="term" value="P:execution phase of apoptosis"/>
    <property type="evidence" value="ECO:0000314"/>
    <property type="project" value="FlyBase"/>
</dbReference>
<dbReference type="GO" id="GO:0061060">
    <property type="term" value="P:negative regulation of peptidoglycan recognition protein signaling pathway"/>
    <property type="evidence" value="ECO:0000315"/>
    <property type="project" value="FlyBase"/>
</dbReference>
<dbReference type="GO" id="GO:0045751">
    <property type="term" value="P:negative regulation of Toll signaling pathway"/>
    <property type="evidence" value="ECO:0000315"/>
    <property type="project" value="FlyBase"/>
</dbReference>
<dbReference type="GO" id="GO:0016322">
    <property type="term" value="P:neuron remodeling"/>
    <property type="evidence" value="ECO:0000315"/>
    <property type="project" value="FlyBase"/>
</dbReference>
<dbReference type="GO" id="GO:0045476">
    <property type="term" value="P:nurse cell apoptotic process"/>
    <property type="evidence" value="ECO:0000316"/>
    <property type="project" value="FlyBase"/>
</dbReference>
<dbReference type="GO" id="GO:0043525">
    <property type="term" value="P:positive regulation of neuron apoptotic process"/>
    <property type="evidence" value="ECO:0000318"/>
    <property type="project" value="GO_Central"/>
</dbReference>
<dbReference type="GO" id="GO:0012501">
    <property type="term" value="P:programmed cell death"/>
    <property type="evidence" value="ECO:0000314"/>
    <property type="project" value="FlyBase"/>
</dbReference>
<dbReference type="GO" id="GO:0010623">
    <property type="term" value="P:programmed cell death involved in cell development"/>
    <property type="evidence" value="ECO:0000315"/>
    <property type="project" value="FlyBase"/>
</dbReference>
<dbReference type="GO" id="GO:0006508">
    <property type="term" value="P:proteolysis"/>
    <property type="evidence" value="ECO:0000314"/>
    <property type="project" value="FlyBase"/>
</dbReference>
<dbReference type="GO" id="GO:0010165">
    <property type="term" value="P:response to X-ray"/>
    <property type="evidence" value="ECO:0000315"/>
    <property type="project" value="FlyBase"/>
</dbReference>
<dbReference type="GO" id="GO:0035070">
    <property type="term" value="P:salivary gland histolysis"/>
    <property type="evidence" value="ECO:0000315"/>
    <property type="project" value="FlyBase"/>
</dbReference>
<dbReference type="GO" id="GO:0048515">
    <property type="term" value="P:spermatid differentiation"/>
    <property type="evidence" value="ECO:0000315"/>
    <property type="project" value="FlyBase"/>
</dbReference>
<dbReference type="CDD" id="cd00032">
    <property type="entry name" value="CASc"/>
    <property type="match status" value="1"/>
</dbReference>
<dbReference type="FunFam" id="3.40.50.1460:FF:000001">
    <property type="entry name" value="Caspase-3 preproprotein"/>
    <property type="match status" value="1"/>
</dbReference>
<dbReference type="Gene3D" id="3.40.50.1460">
    <property type="match status" value="1"/>
</dbReference>
<dbReference type="InterPro" id="IPR029030">
    <property type="entry name" value="Caspase-like_dom_sf"/>
</dbReference>
<dbReference type="InterPro" id="IPR033139">
    <property type="entry name" value="Caspase_cys_AS"/>
</dbReference>
<dbReference type="InterPro" id="IPR016129">
    <property type="entry name" value="Caspase_his_AS"/>
</dbReference>
<dbReference type="InterPro" id="IPR002398">
    <property type="entry name" value="Pept_C14"/>
</dbReference>
<dbReference type="InterPro" id="IPR011600">
    <property type="entry name" value="Pept_C14_caspase"/>
</dbReference>
<dbReference type="InterPro" id="IPR002138">
    <property type="entry name" value="Pept_C14_p10"/>
</dbReference>
<dbReference type="InterPro" id="IPR001309">
    <property type="entry name" value="Pept_C14_p20"/>
</dbReference>
<dbReference type="InterPro" id="IPR015917">
    <property type="entry name" value="Pept_C14A"/>
</dbReference>
<dbReference type="PANTHER" id="PTHR10454">
    <property type="entry name" value="CASPASE"/>
    <property type="match status" value="1"/>
</dbReference>
<dbReference type="PANTHER" id="PTHR10454:SF245">
    <property type="entry name" value="CASPASE-RELATED"/>
    <property type="match status" value="1"/>
</dbReference>
<dbReference type="Pfam" id="PF00656">
    <property type="entry name" value="Peptidase_C14"/>
    <property type="match status" value="1"/>
</dbReference>
<dbReference type="PRINTS" id="PR00376">
    <property type="entry name" value="IL1BCENZYME"/>
</dbReference>
<dbReference type="SMART" id="SM00115">
    <property type="entry name" value="CASc"/>
    <property type="match status" value="1"/>
</dbReference>
<dbReference type="SUPFAM" id="SSF52129">
    <property type="entry name" value="Caspase-like"/>
    <property type="match status" value="1"/>
</dbReference>
<dbReference type="PROSITE" id="PS01122">
    <property type="entry name" value="CASPASE_CYS"/>
    <property type="match status" value="1"/>
</dbReference>
<dbReference type="PROSITE" id="PS01121">
    <property type="entry name" value="CASPASE_HIS"/>
    <property type="match status" value="1"/>
</dbReference>
<dbReference type="PROSITE" id="PS50207">
    <property type="entry name" value="CASPASE_P10"/>
    <property type="match status" value="1"/>
</dbReference>
<dbReference type="PROSITE" id="PS50208">
    <property type="entry name" value="CASPASE_P20"/>
    <property type="match status" value="1"/>
</dbReference>